<dbReference type="EMBL" id="CR859234">
    <property type="protein sequence ID" value="CAH91414.1"/>
    <property type="molecule type" value="mRNA"/>
</dbReference>
<dbReference type="RefSeq" id="NP_001127414.1">
    <property type="nucleotide sequence ID" value="NM_001133942.2"/>
</dbReference>
<dbReference type="RefSeq" id="NP_001417677.1">
    <property type="nucleotide sequence ID" value="NM_001430748.1"/>
</dbReference>
<dbReference type="RefSeq" id="XP_009242651.1">
    <property type="nucleotide sequence ID" value="XM_009244376.1"/>
</dbReference>
<dbReference type="RefSeq" id="XP_009242652.1">
    <property type="nucleotide sequence ID" value="XM_009244377.1"/>
</dbReference>
<dbReference type="SMR" id="Q5R9Z6"/>
<dbReference type="FunCoup" id="Q5R9Z6">
    <property type="interactions" value="1109"/>
</dbReference>
<dbReference type="STRING" id="9601.ENSPPYP00000021474"/>
<dbReference type="Ensembl" id="ENSPPYT00000059224.1">
    <property type="protein sequence ID" value="ENSPPYP00000030326.1"/>
    <property type="gene ID" value="ENSPPYG00000019166.3"/>
</dbReference>
<dbReference type="GeneID" id="100189792"/>
<dbReference type="CTD" id="1993"/>
<dbReference type="eggNOG" id="KOG0145">
    <property type="taxonomic scope" value="Eukaryota"/>
</dbReference>
<dbReference type="GeneTree" id="ENSGT00940000156823"/>
<dbReference type="HOGENOM" id="CLU_026186_2_2_1"/>
<dbReference type="InParanoid" id="Q5R9Z6"/>
<dbReference type="Proteomes" id="UP000001595">
    <property type="component" value="Chromosome 9"/>
</dbReference>
<dbReference type="GO" id="GO:1990904">
    <property type="term" value="C:ribonucleoprotein complex"/>
    <property type="evidence" value="ECO:0007669"/>
    <property type="project" value="InterPro"/>
</dbReference>
<dbReference type="GO" id="GO:0003723">
    <property type="term" value="F:RNA binding"/>
    <property type="evidence" value="ECO:0007669"/>
    <property type="project" value="UniProtKB-KW"/>
</dbReference>
<dbReference type="CDD" id="cd12771">
    <property type="entry name" value="RRM1_HuB"/>
    <property type="match status" value="1"/>
</dbReference>
<dbReference type="CDD" id="cd12775">
    <property type="entry name" value="RRM2_HuB"/>
    <property type="match status" value="1"/>
</dbReference>
<dbReference type="CDD" id="cd12654">
    <property type="entry name" value="RRM3_HuB"/>
    <property type="match status" value="1"/>
</dbReference>
<dbReference type="FunFam" id="3.30.70.330:FF:000006">
    <property type="entry name" value="ELAV-like 3"/>
    <property type="match status" value="1"/>
</dbReference>
<dbReference type="FunFam" id="3.30.70.330:FF:000005">
    <property type="entry name" value="ELAV-like protein"/>
    <property type="match status" value="1"/>
</dbReference>
<dbReference type="FunFam" id="3.30.70.330:FF:000017">
    <property type="entry name" value="ELAV-like protein"/>
    <property type="match status" value="1"/>
</dbReference>
<dbReference type="Gene3D" id="3.30.70.330">
    <property type="match status" value="3"/>
</dbReference>
<dbReference type="InterPro" id="IPR006548">
    <property type="entry name" value="ELAD_HU_SF"/>
</dbReference>
<dbReference type="InterPro" id="IPR034999">
    <property type="entry name" value="HuB_RRM2"/>
</dbReference>
<dbReference type="InterPro" id="IPR034914">
    <property type="entry name" value="HuB_RRM3"/>
</dbReference>
<dbReference type="InterPro" id="IPR002343">
    <property type="entry name" value="Hud_Sxl_RNA"/>
</dbReference>
<dbReference type="InterPro" id="IPR012677">
    <property type="entry name" value="Nucleotide-bd_a/b_plait_sf"/>
</dbReference>
<dbReference type="InterPro" id="IPR035979">
    <property type="entry name" value="RBD_domain_sf"/>
</dbReference>
<dbReference type="InterPro" id="IPR000504">
    <property type="entry name" value="RRM_dom"/>
</dbReference>
<dbReference type="NCBIfam" id="TIGR01661">
    <property type="entry name" value="ELAV_HUD_SF"/>
    <property type="match status" value="1"/>
</dbReference>
<dbReference type="PANTHER" id="PTHR10352">
    <property type="entry name" value="EUKARYOTIC TRANSLATION INITIATION FACTOR 3 SUBUNIT G"/>
    <property type="match status" value="1"/>
</dbReference>
<dbReference type="Pfam" id="PF00076">
    <property type="entry name" value="RRM_1"/>
    <property type="match status" value="3"/>
</dbReference>
<dbReference type="PRINTS" id="PR00961">
    <property type="entry name" value="HUDSXLRNA"/>
</dbReference>
<dbReference type="SMART" id="SM00360">
    <property type="entry name" value="RRM"/>
    <property type="match status" value="3"/>
</dbReference>
<dbReference type="SUPFAM" id="SSF54928">
    <property type="entry name" value="RNA-binding domain, RBD"/>
    <property type="match status" value="2"/>
</dbReference>
<dbReference type="PROSITE" id="PS50102">
    <property type="entry name" value="RRM"/>
    <property type="match status" value="3"/>
</dbReference>
<name>ELAV2_PONAB</name>
<evidence type="ECO:0000250" key="1">
    <source>
        <dbReference type="UniProtKB" id="Q12926"/>
    </source>
</evidence>
<evidence type="ECO:0000250" key="2">
    <source>
        <dbReference type="UniProtKB" id="Q60899"/>
    </source>
</evidence>
<evidence type="ECO:0000255" key="3">
    <source>
        <dbReference type="PROSITE-ProRule" id="PRU00176"/>
    </source>
</evidence>
<evidence type="ECO:0000256" key="4">
    <source>
        <dbReference type="SAM" id="MobiDB-lite"/>
    </source>
</evidence>
<evidence type="ECO:0000305" key="5"/>
<sequence>METQLSNGPTCNNTANGPTTINNNCSSPVDSGNTEDSKTNLIVNYLPQNMTQEELKSLFGSIGEIESCKLVRDKITGQSLGYGFVNYIDPKDAEKAINTLNGLRLQTKTIKVSYARPSSASIRDANLYVSGLPKTMTQKELEQLFSQYGRIITSRILVDQVTGISRGVGFIRFDKRIEAEEAIKGLNGQKPPGATEPITVKFANNPSQKTNQAILSQLYQSPNRRYPGPLAQQAQRFRLDNLLNMAYGVKRFSPMTIDGMTSLAGINIPGHPGTGWCIFVYNLAPDADESILWQMFGPFGAVTNVKVIRDFNTNKCKGFGFVTMTNYDEAAMAIASLNGYRLGDRVLQVSFKTNKTHKA</sequence>
<organism>
    <name type="scientific">Pongo abelii</name>
    <name type="common">Sumatran orangutan</name>
    <name type="synonym">Pongo pygmaeus abelii</name>
    <dbReference type="NCBI Taxonomy" id="9601"/>
    <lineage>
        <taxon>Eukaryota</taxon>
        <taxon>Metazoa</taxon>
        <taxon>Chordata</taxon>
        <taxon>Craniata</taxon>
        <taxon>Vertebrata</taxon>
        <taxon>Euteleostomi</taxon>
        <taxon>Mammalia</taxon>
        <taxon>Eutheria</taxon>
        <taxon>Euarchontoglires</taxon>
        <taxon>Primates</taxon>
        <taxon>Haplorrhini</taxon>
        <taxon>Catarrhini</taxon>
        <taxon>Hominidae</taxon>
        <taxon>Pongo</taxon>
    </lineage>
</organism>
<reference key="1">
    <citation type="submission" date="2004-11" db="EMBL/GenBank/DDBJ databases">
        <authorList>
            <consortium name="The German cDNA consortium"/>
        </authorList>
    </citation>
    <scope>NUCLEOTIDE SEQUENCE [LARGE SCALE MRNA]</scope>
    <source>
        <tissue>Brain cortex</tissue>
    </source>
</reference>
<gene>
    <name type="primary">ELAVL2</name>
</gene>
<keyword id="KW-0597">Phosphoprotein</keyword>
<keyword id="KW-1185">Reference proteome</keyword>
<keyword id="KW-0677">Repeat</keyword>
<keyword id="KW-0694">RNA-binding</keyword>
<proteinExistence type="evidence at transcript level"/>
<comment type="function">
    <text evidence="2">RNA-binding protein that binds to the 3' untranslated region (3'UTR) of target mRNAs (By similarity). Seems to recognize a GAAA motif (By similarity). Can bind to its own 3'UTR, the FOS 3'UTR and the ID 3'UTR (By similarity).</text>
</comment>
<comment type="subunit">
    <text evidence="1 2">Interacts with IGF2BP1 (By similarity). Interacts with MAP1B light chain LC1 (By similarity).</text>
</comment>
<comment type="similarity">
    <text evidence="5">Belongs to the RRM elav family.</text>
</comment>
<accession>Q5R9Z6</accession>
<protein>
    <recommendedName>
        <fullName>ELAV-like protein 2</fullName>
    </recommendedName>
</protein>
<feature type="chain" id="PRO_0000232767" description="ELAV-like protein 2">
    <location>
        <begin position="1"/>
        <end position="359"/>
    </location>
</feature>
<feature type="domain" description="RRM 1" evidence="3">
    <location>
        <begin position="39"/>
        <end position="117"/>
    </location>
</feature>
<feature type="domain" description="RRM 2" evidence="3">
    <location>
        <begin position="125"/>
        <end position="205"/>
    </location>
</feature>
<feature type="domain" description="RRM 3" evidence="3">
    <location>
        <begin position="276"/>
        <end position="354"/>
    </location>
</feature>
<feature type="region of interest" description="Disordered" evidence="4">
    <location>
        <begin position="1"/>
        <end position="33"/>
    </location>
</feature>
<feature type="modified residue" description="Phosphoserine" evidence="1">
    <location>
        <position position="221"/>
    </location>
</feature>